<gene>
    <name type="primary">sqz</name>
    <name type="ORF">CG5557</name>
</gene>
<protein>
    <recommendedName>
        <fullName>Zinc finger protein squeeze</fullName>
    </recommendedName>
</protein>
<feature type="chain" id="PRO_0000372665" description="Zinc finger protein squeeze">
    <location>
        <begin position="1"/>
        <end position="535"/>
    </location>
</feature>
<feature type="zinc finger region" description="C2H2-type 1" evidence="1">
    <location>
        <begin position="158"/>
        <end position="180"/>
    </location>
</feature>
<feature type="zinc finger region" description="C2H2-type 2" evidence="1">
    <location>
        <begin position="186"/>
        <end position="208"/>
    </location>
</feature>
<feature type="zinc finger region" description="C2H2-type 3" evidence="1">
    <location>
        <begin position="214"/>
        <end position="238"/>
    </location>
</feature>
<feature type="zinc finger region" description="C2H2-type 4" evidence="1">
    <location>
        <begin position="244"/>
        <end position="266"/>
    </location>
</feature>
<feature type="zinc finger region" description="C2H2-type 5" evidence="1">
    <location>
        <begin position="275"/>
        <end position="297"/>
    </location>
</feature>
<feature type="region of interest" description="Disordered" evidence="2">
    <location>
        <begin position="70"/>
        <end position="157"/>
    </location>
</feature>
<feature type="region of interest" description="Disordered" evidence="2">
    <location>
        <begin position="417"/>
        <end position="475"/>
    </location>
</feature>
<feature type="compositionally biased region" description="Low complexity" evidence="2">
    <location>
        <begin position="70"/>
        <end position="97"/>
    </location>
</feature>
<feature type="compositionally biased region" description="Low complexity" evidence="2">
    <location>
        <begin position="131"/>
        <end position="142"/>
    </location>
</feature>
<feature type="compositionally biased region" description="Basic and acidic residues" evidence="2">
    <location>
        <begin position="145"/>
        <end position="156"/>
    </location>
</feature>
<feature type="compositionally biased region" description="Low complexity" evidence="2">
    <location>
        <begin position="419"/>
        <end position="443"/>
    </location>
</feature>
<feature type="modified residue" description="Phosphothreonine" evidence="10">
    <location>
        <position position="395"/>
    </location>
</feature>
<feature type="modified residue" description="Phosphoserine" evidence="10">
    <location>
        <position position="399"/>
    </location>
</feature>
<feature type="modified residue" description="Phosphoserine" evidence="10">
    <location>
        <position position="401"/>
    </location>
</feature>
<feature type="modified residue" description="Phosphoserine" evidence="7">
    <location>
        <position position="475"/>
    </location>
</feature>
<feature type="modified residue" description="Phosphotyrosine" evidence="7">
    <location>
        <position position="479"/>
    </location>
</feature>
<feature type="modified residue" description="Phosphotyrosine" evidence="7">
    <location>
        <position position="481"/>
    </location>
</feature>
<feature type="sequence conflict" description="In Ref. 4; AAM48422." evidence="11" ref="4">
    <original>G</original>
    <variation>S</variation>
    <location>
        <position position="62"/>
    </location>
</feature>
<feature type="sequence conflict" description="In Ref. 4; AAM48422." evidence="11" ref="4">
    <original>Q</original>
    <variation>K</variation>
    <location>
        <position position="419"/>
    </location>
</feature>
<feature type="sequence conflict" description="In Ref. 4; AAM48422." evidence="11" ref="4">
    <original>Q</original>
    <variation>R</variation>
    <location>
        <position position="443"/>
    </location>
</feature>
<evidence type="ECO:0000255" key="1">
    <source>
        <dbReference type="PROSITE-ProRule" id="PRU00042"/>
    </source>
</evidence>
<evidence type="ECO:0000256" key="2">
    <source>
        <dbReference type="SAM" id="MobiDB-lite"/>
    </source>
</evidence>
<evidence type="ECO:0000269" key="3">
    <source>
    </source>
</evidence>
<evidence type="ECO:0000269" key="4">
    <source>
    </source>
</evidence>
<evidence type="ECO:0000269" key="5">
    <source>
    </source>
</evidence>
<evidence type="ECO:0000269" key="6">
    <source>
    </source>
</evidence>
<evidence type="ECO:0000269" key="7">
    <source>
    </source>
</evidence>
<evidence type="ECO:0000269" key="8">
    <source>
    </source>
</evidence>
<evidence type="ECO:0000269" key="9">
    <source>
    </source>
</evidence>
<evidence type="ECO:0000269" key="10">
    <source>
    </source>
</evidence>
<evidence type="ECO:0000305" key="11"/>
<proteinExistence type="evidence at protein level"/>
<accession>Q9VDZ3</accession>
<accession>Q8MT44</accession>
<accession>Q9U9A8</accession>
<comment type="function">
    <text evidence="3 4 5 6 8">Transcription factor involved in neuronal fate specification. First required in embryonic CNS development to define the number of cells that express apterous (ap) in the ap thoracic cluster of interneurons. Later on, it plays a central role in the combinatorial code of transcription factors that specifies the fate of the Tv neuron in the ap cluster by participating in the transcription regulation of FMRFa in Tv cells. Also required for projection neuron dendritic targeting.</text>
</comment>
<comment type="subunit">
    <text evidence="5 8">Interacts with nab; which acts as a coactivator. Interacts with ap.</text>
</comment>
<comment type="interaction">
    <interactant intactId="EBI-2565022">
        <id>Q9VDZ3</id>
    </interactant>
    <interactant intactId="EBI-869024">
        <id>Q94527</id>
        <label>Rel</label>
    </interactant>
    <organismsDiffer>false</organismsDiffer>
    <experiments>3</experiments>
</comment>
<comment type="subcellular location">
    <subcellularLocation>
        <location evidence="11">Nucleus</location>
    </subcellularLocation>
</comment>
<comment type="tissue specificity">
    <text evidence="3 4 5 8 9">Largely restricted to subsets of cells in the CNS throughout embryonic and first instar larval (L1) development. Expressed in a population of lateral interneurons, primarily projecting axons in the anterior and posterior commissures. Overlaps with ap within the thoracic ap cluster. By stage 17, it is restricted to 2 neurons within the ap-cluster, with one neuron typically continuing to display higher levels of expression. Selectively expressed at higher levels within the FMRFa Tv neurons. Expressed in all leucokinergic cells.</text>
</comment>
<comment type="disruption phenotype">
    <text evidence="3 4">Death at larval stage. Larvae display a motility defect whereby the body wall musculature overcontract radially during the peristaltic wave typical of insect larval motility, apparent as a 'squeezing' of intestine.</text>
</comment>
<comment type="similarity">
    <text evidence="11">Belongs to the krueppel C2H2-type zinc-finger protein family.</text>
</comment>
<name>SQZ_DROME</name>
<keyword id="KW-0217">Developmental protein</keyword>
<keyword id="KW-0221">Differentiation</keyword>
<keyword id="KW-0479">Metal-binding</keyword>
<keyword id="KW-0524">Neurogenesis</keyword>
<keyword id="KW-0539">Nucleus</keyword>
<keyword id="KW-0597">Phosphoprotein</keyword>
<keyword id="KW-1185">Reference proteome</keyword>
<keyword id="KW-0677">Repeat</keyword>
<keyword id="KW-0804">Transcription</keyword>
<keyword id="KW-0805">Transcription regulation</keyword>
<keyword id="KW-0862">Zinc</keyword>
<keyword id="KW-0863">Zinc-finger</keyword>
<sequence length="535" mass="59549">MAELPTAPNGVPSGDYLHRSIDQLRSLGHLTTAQLVHDYKPFNISEFRQNVAERLDYSLKNGLVQHQQQMVMEQQPHPDQQQQQHLHHPQQQQHPPQLKVSYSAPNSPPTPHEQQEQKYDPNRSPPRQQMSSASGSGSNGSSPEEESRRGDGDQAKPYKCGSCSKSFANSSYLSQHTRIHLGIKPYRCEICQRKFTQLSHLQQHIRTHTGDKPYKCRHAGCPKAFSQLSNLQSHSRCHQTDKPFKCNSCYKCFSDEMTLLEHIPKHKDSKHLKTHICNLCGKSYTQETYLQKHLQKHAEKAEKQQHRHTAQVAAHQQHVPASGIGLNLQRQAMNDVNAAYWAKMGADSAAASLAEAIQQQLPQAGGQPYGNFASLQQQHQQQQQELLHHQRLADTPGHSHSPHEEAAGEDLVLRQSTPQHHLQQQQQQQQQQQAQQQQQAQHQPSPGPGNSAFTPLSATVAPPPHLQQHRGPPGSAAAYLYQQNAAAAAAAFPTQLISLHQIRNYAHQPGAAGLIAGDHLALGLSAVNAAKEKAQ</sequence>
<organism>
    <name type="scientific">Drosophila melanogaster</name>
    <name type="common">Fruit fly</name>
    <dbReference type="NCBI Taxonomy" id="7227"/>
    <lineage>
        <taxon>Eukaryota</taxon>
        <taxon>Metazoa</taxon>
        <taxon>Ecdysozoa</taxon>
        <taxon>Arthropoda</taxon>
        <taxon>Hexapoda</taxon>
        <taxon>Insecta</taxon>
        <taxon>Pterygota</taxon>
        <taxon>Neoptera</taxon>
        <taxon>Endopterygota</taxon>
        <taxon>Diptera</taxon>
        <taxon>Brachycera</taxon>
        <taxon>Muscomorpha</taxon>
        <taxon>Ephydroidea</taxon>
        <taxon>Drosophilidae</taxon>
        <taxon>Drosophila</taxon>
        <taxon>Sophophora</taxon>
    </lineage>
</organism>
<dbReference type="EMBL" id="AF173847">
    <property type="protein sequence ID" value="AAD48878.1"/>
    <property type="molecule type" value="mRNA"/>
</dbReference>
<dbReference type="EMBL" id="AE014297">
    <property type="protein sequence ID" value="AAF55644.2"/>
    <property type="molecule type" value="Genomic_DNA"/>
</dbReference>
<dbReference type="EMBL" id="AY118393">
    <property type="protein sequence ID" value="AAM48422.1"/>
    <property type="molecule type" value="mRNA"/>
</dbReference>
<dbReference type="RefSeq" id="NP_524403.1">
    <property type="nucleotide sequence ID" value="NM_079679.3"/>
</dbReference>
<dbReference type="SMR" id="Q9VDZ3"/>
<dbReference type="BioGRID" id="67298">
    <property type="interactions" value="13"/>
</dbReference>
<dbReference type="FunCoup" id="Q9VDZ3">
    <property type="interactions" value="3"/>
</dbReference>
<dbReference type="IntAct" id="Q9VDZ3">
    <property type="interactions" value="7"/>
</dbReference>
<dbReference type="STRING" id="7227.FBpp0083147"/>
<dbReference type="iPTMnet" id="Q9VDZ3"/>
<dbReference type="PaxDb" id="7227-FBpp0083147"/>
<dbReference type="EnsemblMetazoa" id="FBtr0083733">
    <property type="protein sequence ID" value="FBpp0083147"/>
    <property type="gene ID" value="FBgn0010768"/>
</dbReference>
<dbReference type="GeneID" id="42300"/>
<dbReference type="KEGG" id="dme:Dmel_CG5557"/>
<dbReference type="UCSC" id="CG5557-RA">
    <property type="organism name" value="d. melanogaster"/>
</dbReference>
<dbReference type="AGR" id="FB:FBgn0010768"/>
<dbReference type="CTD" id="42300"/>
<dbReference type="FlyBase" id="FBgn0010768">
    <property type="gene designation" value="sqz"/>
</dbReference>
<dbReference type="VEuPathDB" id="VectorBase:FBgn0010768"/>
<dbReference type="eggNOG" id="KOG1721">
    <property type="taxonomic scope" value="Eukaryota"/>
</dbReference>
<dbReference type="HOGENOM" id="CLU_026739_0_0_1"/>
<dbReference type="InParanoid" id="Q9VDZ3"/>
<dbReference type="OMA" id="QRQAMND"/>
<dbReference type="OrthoDB" id="6077919at2759"/>
<dbReference type="PhylomeDB" id="Q9VDZ3"/>
<dbReference type="BioGRID-ORCS" id="42300">
    <property type="hits" value="0 hits in 3 CRISPR screens"/>
</dbReference>
<dbReference type="GenomeRNAi" id="42300"/>
<dbReference type="PRO" id="PR:Q9VDZ3"/>
<dbReference type="Proteomes" id="UP000000803">
    <property type="component" value="Chromosome 3R"/>
</dbReference>
<dbReference type="Bgee" id="FBgn0010768">
    <property type="expression patterns" value="Expressed in nurse follicle cell (Drosophila) in ovary and 87 other cell types or tissues"/>
</dbReference>
<dbReference type="ExpressionAtlas" id="Q9VDZ3">
    <property type="expression patterns" value="baseline and differential"/>
</dbReference>
<dbReference type="GO" id="GO:0005634">
    <property type="term" value="C:nucleus"/>
    <property type="evidence" value="ECO:0007669"/>
    <property type="project" value="UniProtKB-SubCell"/>
</dbReference>
<dbReference type="GO" id="GO:0000981">
    <property type="term" value="F:DNA-binding transcription factor activity, RNA polymerase II-specific"/>
    <property type="evidence" value="ECO:0000318"/>
    <property type="project" value="GO_Central"/>
</dbReference>
<dbReference type="GO" id="GO:0000978">
    <property type="term" value="F:RNA polymerase II cis-regulatory region sequence-specific DNA binding"/>
    <property type="evidence" value="ECO:0000318"/>
    <property type="project" value="GO_Central"/>
</dbReference>
<dbReference type="GO" id="GO:0008270">
    <property type="term" value="F:zinc ion binding"/>
    <property type="evidence" value="ECO:0007669"/>
    <property type="project" value="UniProtKB-KW"/>
</dbReference>
<dbReference type="GO" id="GO:0070983">
    <property type="term" value="P:dendrite guidance"/>
    <property type="evidence" value="ECO:0000315"/>
    <property type="project" value="FlyBase"/>
</dbReference>
<dbReference type="GO" id="GO:0014019">
    <property type="term" value="P:neuroblast development"/>
    <property type="evidence" value="ECO:0000315"/>
    <property type="project" value="FlyBase"/>
</dbReference>
<dbReference type="GO" id="GO:0048666">
    <property type="term" value="P:neuron development"/>
    <property type="evidence" value="ECO:0000315"/>
    <property type="project" value="FlyBase"/>
</dbReference>
<dbReference type="GO" id="GO:0006357">
    <property type="term" value="P:regulation of transcription by RNA polymerase II"/>
    <property type="evidence" value="ECO:0000318"/>
    <property type="project" value="GO_Central"/>
</dbReference>
<dbReference type="FunFam" id="3.30.160.60:FF:000158">
    <property type="entry name" value="Zinc finger protein 362"/>
    <property type="match status" value="1"/>
</dbReference>
<dbReference type="FunFam" id="3.30.160.60:FF:000648">
    <property type="entry name" value="Zinc finger protein rotund"/>
    <property type="match status" value="1"/>
</dbReference>
<dbReference type="FunFam" id="3.30.160.60:FF:001172">
    <property type="entry name" value="Zinc finger protein rotund"/>
    <property type="match status" value="1"/>
</dbReference>
<dbReference type="FunFam" id="3.30.160.60:FF:001678">
    <property type="entry name" value="Zinc finger protein rotund"/>
    <property type="match status" value="1"/>
</dbReference>
<dbReference type="Gene3D" id="3.30.160.60">
    <property type="entry name" value="Classic Zinc Finger"/>
    <property type="match status" value="4"/>
</dbReference>
<dbReference type="InterPro" id="IPR050331">
    <property type="entry name" value="Zinc_finger"/>
</dbReference>
<dbReference type="InterPro" id="IPR036236">
    <property type="entry name" value="Znf_C2H2_sf"/>
</dbReference>
<dbReference type="InterPro" id="IPR013087">
    <property type="entry name" value="Znf_C2H2_type"/>
</dbReference>
<dbReference type="PANTHER" id="PTHR16515:SF66">
    <property type="entry name" value="C2H2-TYPE DOMAIN-CONTAINING PROTEIN"/>
    <property type="match status" value="1"/>
</dbReference>
<dbReference type="PANTHER" id="PTHR16515">
    <property type="entry name" value="PR DOMAIN ZINC FINGER PROTEIN"/>
    <property type="match status" value="1"/>
</dbReference>
<dbReference type="Pfam" id="PF00096">
    <property type="entry name" value="zf-C2H2"/>
    <property type="match status" value="3"/>
</dbReference>
<dbReference type="SMART" id="SM00355">
    <property type="entry name" value="ZnF_C2H2"/>
    <property type="match status" value="5"/>
</dbReference>
<dbReference type="SUPFAM" id="SSF57667">
    <property type="entry name" value="beta-beta-alpha zinc fingers"/>
    <property type="match status" value="3"/>
</dbReference>
<dbReference type="PROSITE" id="PS00028">
    <property type="entry name" value="ZINC_FINGER_C2H2_1"/>
    <property type="match status" value="5"/>
</dbReference>
<dbReference type="PROSITE" id="PS50157">
    <property type="entry name" value="ZINC_FINGER_C2H2_2"/>
    <property type="match status" value="5"/>
</dbReference>
<reference key="1">
    <citation type="submission" date="1999-07" db="EMBL/GenBank/DDBJ databases">
        <title>GH22029 putative Zn finger transcription factor in 91F.</title>
        <authorList>
            <person name="Barta J.L."/>
            <person name="Percival-Smith A."/>
        </authorList>
    </citation>
    <scope>NUCLEOTIDE SEQUENCE [MRNA]</scope>
</reference>
<reference key="2">
    <citation type="journal article" date="2000" name="Science">
        <title>The genome sequence of Drosophila melanogaster.</title>
        <authorList>
            <person name="Adams M.D."/>
            <person name="Celniker S.E."/>
            <person name="Holt R.A."/>
            <person name="Evans C.A."/>
            <person name="Gocayne J.D."/>
            <person name="Amanatides P.G."/>
            <person name="Scherer S.E."/>
            <person name="Li P.W."/>
            <person name="Hoskins R.A."/>
            <person name="Galle R.F."/>
            <person name="George R.A."/>
            <person name="Lewis S.E."/>
            <person name="Richards S."/>
            <person name="Ashburner M."/>
            <person name="Henderson S.N."/>
            <person name="Sutton G.G."/>
            <person name="Wortman J.R."/>
            <person name="Yandell M.D."/>
            <person name="Zhang Q."/>
            <person name="Chen L.X."/>
            <person name="Brandon R.C."/>
            <person name="Rogers Y.-H.C."/>
            <person name="Blazej R.G."/>
            <person name="Champe M."/>
            <person name="Pfeiffer B.D."/>
            <person name="Wan K.H."/>
            <person name="Doyle C."/>
            <person name="Baxter E.G."/>
            <person name="Helt G."/>
            <person name="Nelson C.R."/>
            <person name="Miklos G.L.G."/>
            <person name="Abril J.F."/>
            <person name="Agbayani A."/>
            <person name="An H.-J."/>
            <person name="Andrews-Pfannkoch C."/>
            <person name="Baldwin D."/>
            <person name="Ballew R.M."/>
            <person name="Basu A."/>
            <person name="Baxendale J."/>
            <person name="Bayraktaroglu L."/>
            <person name="Beasley E.M."/>
            <person name="Beeson K.Y."/>
            <person name="Benos P.V."/>
            <person name="Berman B.P."/>
            <person name="Bhandari D."/>
            <person name="Bolshakov S."/>
            <person name="Borkova D."/>
            <person name="Botchan M.R."/>
            <person name="Bouck J."/>
            <person name="Brokstein P."/>
            <person name="Brottier P."/>
            <person name="Burtis K.C."/>
            <person name="Busam D.A."/>
            <person name="Butler H."/>
            <person name="Cadieu E."/>
            <person name="Center A."/>
            <person name="Chandra I."/>
            <person name="Cherry J.M."/>
            <person name="Cawley S."/>
            <person name="Dahlke C."/>
            <person name="Davenport L.B."/>
            <person name="Davies P."/>
            <person name="de Pablos B."/>
            <person name="Delcher A."/>
            <person name="Deng Z."/>
            <person name="Mays A.D."/>
            <person name="Dew I."/>
            <person name="Dietz S.M."/>
            <person name="Dodson K."/>
            <person name="Doup L.E."/>
            <person name="Downes M."/>
            <person name="Dugan-Rocha S."/>
            <person name="Dunkov B.C."/>
            <person name="Dunn P."/>
            <person name="Durbin K.J."/>
            <person name="Evangelista C.C."/>
            <person name="Ferraz C."/>
            <person name="Ferriera S."/>
            <person name="Fleischmann W."/>
            <person name="Fosler C."/>
            <person name="Gabrielian A.E."/>
            <person name="Garg N.S."/>
            <person name="Gelbart W.M."/>
            <person name="Glasser K."/>
            <person name="Glodek A."/>
            <person name="Gong F."/>
            <person name="Gorrell J.H."/>
            <person name="Gu Z."/>
            <person name="Guan P."/>
            <person name="Harris M."/>
            <person name="Harris N.L."/>
            <person name="Harvey D.A."/>
            <person name="Heiman T.J."/>
            <person name="Hernandez J.R."/>
            <person name="Houck J."/>
            <person name="Hostin D."/>
            <person name="Houston K.A."/>
            <person name="Howland T.J."/>
            <person name="Wei M.-H."/>
            <person name="Ibegwam C."/>
            <person name="Jalali M."/>
            <person name="Kalush F."/>
            <person name="Karpen G.H."/>
            <person name="Ke Z."/>
            <person name="Kennison J.A."/>
            <person name="Ketchum K.A."/>
            <person name="Kimmel B.E."/>
            <person name="Kodira C.D."/>
            <person name="Kraft C.L."/>
            <person name="Kravitz S."/>
            <person name="Kulp D."/>
            <person name="Lai Z."/>
            <person name="Lasko P."/>
            <person name="Lei Y."/>
            <person name="Levitsky A.A."/>
            <person name="Li J.H."/>
            <person name="Li Z."/>
            <person name="Liang Y."/>
            <person name="Lin X."/>
            <person name="Liu X."/>
            <person name="Mattei B."/>
            <person name="McIntosh T.C."/>
            <person name="McLeod M.P."/>
            <person name="McPherson D."/>
            <person name="Merkulov G."/>
            <person name="Milshina N.V."/>
            <person name="Mobarry C."/>
            <person name="Morris J."/>
            <person name="Moshrefi A."/>
            <person name="Mount S.M."/>
            <person name="Moy M."/>
            <person name="Murphy B."/>
            <person name="Murphy L."/>
            <person name="Muzny D.M."/>
            <person name="Nelson D.L."/>
            <person name="Nelson D.R."/>
            <person name="Nelson K.A."/>
            <person name="Nixon K."/>
            <person name="Nusskern D.R."/>
            <person name="Pacleb J.M."/>
            <person name="Palazzolo M."/>
            <person name="Pittman G.S."/>
            <person name="Pan S."/>
            <person name="Pollard J."/>
            <person name="Puri V."/>
            <person name="Reese M.G."/>
            <person name="Reinert K."/>
            <person name="Remington K."/>
            <person name="Saunders R.D.C."/>
            <person name="Scheeler F."/>
            <person name="Shen H."/>
            <person name="Shue B.C."/>
            <person name="Siden-Kiamos I."/>
            <person name="Simpson M."/>
            <person name="Skupski M.P."/>
            <person name="Smith T.J."/>
            <person name="Spier E."/>
            <person name="Spradling A.C."/>
            <person name="Stapleton M."/>
            <person name="Strong R."/>
            <person name="Sun E."/>
            <person name="Svirskas R."/>
            <person name="Tector C."/>
            <person name="Turner R."/>
            <person name="Venter E."/>
            <person name="Wang A.H."/>
            <person name="Wang X."/>
            <person name="Wang Z.-Y."/>
            <person name="Wassarman D.A."/>
            <person name="Weinstock G.M."/>
            <person name="Weissenbach J."/>
            <person name="Williams S.M."/>
            <person name="Woodage T."/>
            <person name="Worley K.C."/>
            <person name="Wu D."/>
            <person name="Yang S."/>
            <person name="Yao Q.A."/>
            <person name="Ye J."/>
            <person name="Yeh R.-F."/>
            <person name="Zaveri J.S."/>
            <person name="Zhan M."/>
            <person name="Zhang G."/>
            <person name="Zhao Q."/>
            <person name="Zheng L."/>
            <person name="Zheng X.H."/>
            <person name="Zhong F.N."/>
            <person name="Zhong W."/>
            <person name="Zhou X."/>
            <person name="Zhu S.C."/>
            <person name="Zhu X."/>
            <person name="Smith H.O."/>
            <person name="Gibbs R.A."/>
            <person name="Myers E.W."/>
            <person name="Rubin G.M."/>
            <person name="Venter J.C."/>
        </authorList>
    </citation>
    <scope>NUCLEOTIDE SEQUENCE [LARGE SCALE GENOMIC DNA]</scope>
    <source>
        <strain>Berkeley</strain>
    </source>
</reference>
<reference key="3">
    <citation type="journal article" date="2002" name="Genome Biol.">
        <title>Annotation of the Drosophila melanogaster euchromatic genome: a systematic review.</title>
        <authorList>
            <person name="Misra S."/>
            <person name="Crosby M.A."/>
            <person name="Mungall C.J."/>
            <person name="Matthews B.B."/>
            <person name="Campbell K.S."/>
            <person name="Hradecky P."/>
            <person name="Huang Y."/>
            <person name="Kaminker J.S."/>
            <person name="Millburn G.H."/>
            <person name="Prochnik S.E."/>
            <person name="Smith C.D."/>
            <person name="Tupy J.L."/>
            <person name="Whitfield E.J."/>
            <person name="Bayraktaroglu L."/>
            <person name="Berman B.P."/>
            <person name="Bettencourt B.R."/>
            <person name="Celniker S.E."/>
            <person name="de Grey A.D.N.J."/>
            <person name="Drysdale R.A."/>
            <person name="Harris N.L."/>
            <person name="Richter J."/>
            <person name="Russo S."/>
            <person name="Schroeder A.J."/>
            <person name="Shu S.Q."/>
            <person name="Stapleton M."/>
            <person name="Yamada C."/>
            <person name="Ashburner M."/>
            <person name="Gelbart W.M."/>
            <person name="Rubin G.M."/>
            <person name="Lewis S.E."/>
        </authorList>
    </citation>
    <scope>GENOME REANNOTATION</scope>
    <source>
        <strain>Berkeley</strain>
    </source>
</reference>
<reference key="4">
    <citation type="journal article" date="2002" name="Genome Biol.">
        <title>A Drosophila full-length cDNA resource.</title>
        <authorList>
            <person name="Stapleton M."/>
            <person name="Carlson J.W."/>
            <person name="Brokstein P."/>
            <person name="Yu C."/>
            <person name="Champe M."/>
            <person name="George R.A."/>
            <person name="Guarin H."/>
            <person name="Kronmiller B."/>
            <person name="Pacleb J.M."/>
            <person name="Park S."/>
            <person name="Wan K.H."/>
            <person name="Rubin G.M."/>
            <person name="Celniker S.E."/>
        </authorList>
    </citation>
    <scope>NUCLEOTIDE SEQUENCE [LARGE SCALE MRNA]</scope>
    <source>
        <strain>Berkeley</strain>
        <tissue>Embryo</tissue>
    </source>
</reference>
<reference key="5">
    <citation type="journal article" date="2003" name="Cell">
        <title>Specification of neuropeptide cell identity by the integration of retrograde BMP signaling and a combinatorial transcription factor code.</title>
        <authorList>
            <person name="Allan D.W."/>
            <person name="St Pierre S.E."/>
            <person name="Miguel-Aliaga I."/>
            <person name="Thor S."/>
        </authorList>
    </citation>
    <scope>FUNCTION</scope>
    <scope>TISSUE SPECIFICITY</scope>
    <scope>DISRUPTION PHENOTYPE</scope>
</reference>
<reference key="6">
    <citation type="journal article" date="2003" name="Mech. Dev.">
        <title>A targeted gain of function screen in the embryonic CNS of Drosophila.</title>
        <authorList>
            <person name="McGovern V.L."/>
            <person name="Pacak C.A."/>
            <person name="Sewell S.T."/>
            <person name="Turski M.L."/>
            <person name="Seeger M.A."/>
        </authorList>
    </citation>
    <scope>FUNCTION</scope>
    <scope>TISSUE SPECIFICITY</scope>
    <scope>DISRUPTION PHENOTYPE</scope>
</reference>
<reference key="7">
    <citation type="journal article" date="2005" name="Neuron">
        <title>Regulators acting in combinatorial codes also act independently in single differentiating neurons.</title>
        <authorList>
            <person name="Allan D.W."/>
            <person name="Park D."/>
            <person name="St Pierre S.E."/>
            <person name="Taghert P.H."/>
            <person name="Thor S."/>
        </authorList>
    </citation>
    <scope>FUNCTION</scope>
    <scope>TISSUE SPECIFICITY</scope>
    <scope>DEVELOPMENTAL STAGE</scope>
    <scope>INTERACTION WITH AP</scope>
</reference>
<reference key="8">
    <citation type="journal article" date="2007" name="Curr. Biol.">
        <title>Intrinsic control of precise dendritic targeting by an ensemble of transcription factors.</title>
        <authorList>
            <person name="Komiyama T."/>
            <person name="Luo L."/>
        </authorList>
    </citation>
    <scope>FUNCTION</scope>
</reference>
<reference key="9">
    <citation type="journal article" date="2007" name="Development">
        <title>Nab controls the activity of the zinc-finger transcription factors Squeeze and Rotund in Drosophila development.</title>
        <authorList>
            <person name="Terriente Felix J."/>
            <person name="Magarinos M."/>
            <person name="Diaz-Benjumea F.J."/>
        </authorList>
    </citation>
    <scope>FUNCTION</scope>
    <scope>TISSUE SPECIFICITY</scope>
    <scope>INTERACTION WITH NAB</scope>
</reference>
<reference key="10">
    <citation type="journal article" date="2007" name="Mech. Dev.">
        <title>Squeeze involvement in the specification of Drosophila leucokinergic neurons: Different regulatory mechanisms endow the same neuropeptide selection.</title>
        <authorList>
            <person name="Herrero P."/>
            <person name="Magarinos M."/>
            <person name="Molina I."/>
            <person name="Benito J."/>
            <person name="Dorado B."/>
            <person name="Turiegano E."/>
            <person name="Canal I."/>
            <person name="Torroja L."/>
        </authorList>
    </citation>
    <scope>TISSUE SPECIFICITY</scope>
</reference>
<reference key="11">
    <citation type="journal article" date="2007" name="Mol. Biosyst.">
        <title>An integrated chemical, mass spectrometric and computational strategy for (quantitative) phosphoproteomics: application to Drosophila melanogaster Kc167 cells.</title>
        <authorList>
            <person name="Bodenmiller B."/>
            <person name="Mueller L.N."/>
            <person name="Pedrioli P.G.A."/>
            <person name="Pflieger D."/>
            <person name="Juenger M.A."/>
            <person name="Eng J.K."/>
            <person name="Aebersold R."/>
            <person name="Tao W.A."/>
        </authorList>
    </citation>
    <scope>PHOSPHORYLATION [LARGE SCALE ANALYSIS] AT SER-475; TYR-479 AND TYR-481</scope>
    <scope>IDENTIFICATION BY MASS SPECTROMETRY</scope>
</reference>
<reference key="12">
    <citation type="journal article" date="2008" name="J. Proteome Res.">
        <title>Phosphoproteome analysis of Drosophila melanogaster embryos.</title>
        <authorList>
            <person name="Zhai B."/>
            <person name="Villen J."/>
            <person name="Beausoleil S.A."/>
            <person name="Mintseris J."/>
            <person name="Gygi S.P."/>
        </authorList>
    </citation>
    <scope>PHOSPHORYLATION [LARGE SCALE ANALYSIS] AT THR-395; SER-399 AND SER-401</scope>
    <scope>IDENTIFICATION BY MASS SPECTROMETRY</scope>
    <source>
        <tissue>Embryo</tissue>
    </source>
</reference>